<evidence type="ECO:0000255" key="1">
    <source>
        <dbReference type="HAMAP-Rule" id="MF_01152"/>
    </source>
</evidence>
<comment type="function">
    <text evidence="1">Participates actively in the response to hyperosmotic and heat shock by preventing the aggregation of stress-denatured proteins and by disaggregating proteins, also in an autonomous, DnaK-independent fashion. Unfolded proteins bind initially to DnaJ; upon interaction with the DnaJ-bound protein, DnaK hydrolyzes its bound ATP, resulting in the formation of a stable complex. GrpE releases ADP from DnaK; ATP binding to DnaK triggers the release of the substrate protein, thus completing the reaction cycle. Several rounds of ATP-dependent interactions between DnaJ, DnaK and GrpE are required for fully efficient folding. Also involved, together with DnaK and GrpE, in the DNA replication of plasmids through activation of initiation proteins.</text>
</comment>
<comment type="cofactor">
    <cofactor evidence="1">
        <name>Zn(2+)</name>
        <dbReference type="ChEBI" id="CHEBI:29105"/>
    </cofactor>
    <text evidence="1">Binds 2 Zn(2+) ions per monomer.</text>
</comment>
<comment type="subunit">
    <text evidence="1">Homodimer.</text>
</comment>
<comment type="subcellular location">
    <subcellularLocation>
        <location evidence="1">Cytoplasm</location>
    </subcellularLocation>
</comment>
<comment type="domain">
    <text evidence="1">The J domain is necessary and sufficient to stimulate DnaK ATPase activity. Zinc center 1 plays an important role in the autonomous, DnaK-independent chaperone activity of DnaJ. Zinc center 2 is essential for interaction with DnaK and for DnaJ activity.</text>
</comment>
<comment type="similarity">
    <text evidence="1">Belongs to the DnaJ family.</text>
</comment>
<protein>
    <recommendedName>
        <fullName evidence="1">Chaperone protein DnaJ 2</fullName>
    </recommendedName>
</protein>
<name>DNAJ2_CORGL</name>
<gene>
    <name evidence="1" type="primary">dnaJ2</name>
    <name type="ordered locus">Cgl2798</name>
    <name type="ordered locus">cg3098</name>
</gene>
<dbReference type="EMBL" id="BA000036">
    <property type="protein sequence ID" value="BAC00192.1"/>
    <property type="molecule type" value="Genomic_DNA"/>
</dbReference>
<dbReference type="EMBL" id="BX927156">
    <property type="protein sequence ID" value="CAF20819.1"/>
    <property type="molecule type" value="Genomic_DNA"/>
</dbReference>
<dbReference type="RefSeq" id="NP_601990.1">
    <property type="nucleotide sequence ID" value="NC_003450.3"/>
</dbReference>
<dbReference type="SMR" id="Q8NLY8"/>
<dbReference type="STRING" id="196627.cg3098"/>
<dbReference type="KEGG" id="cgb:cg3098"/>
<dbReference type="KEGG" id="cgl:Cgl2798"/>
<dbReference type="PATRIC" id="fig|196627.13.peg.2730"/>
<dbReference type="eggNOG" id="COG0484">
    <property type="taxonomic scope" value="Bacteria"/>
</dbReference>
<dbReference type="HOGENOM" id="CLU_017633_0_7_11"/>
<dbReference type="OrthoDB" id="9779889at2"/>
<dbReference type="BioCyc" id="CORYNE:G18NG-12415-MONOMER"/>
<dbReference type="Proteomes" id="UP000000582">
    <property type="component" value="Chromosome"/>
</dbReference>
<dbReference type="Proteomes" id="UP000001009">
    <property type="component" value="Chromosome"/>
</dbReference>
<dbReference type="GO" id="GO:0005737">
    <property type="term" value="C:cytoplasm"/>
    <property type="evidence" value="ECO:0007669"/>
    <property type="project" value="UniProtKB-SubCell"/>
</dbReference>
<dbReference type="GO" id="GO:0005524">
    <property type="term" value="F:ATP binding"/>
    <property type="evidence" value="ECO:0007669"/>
    <property type="project" value="InterPro"/>
</dbReference>
<dbReference type="GO" id="GO:0031072">
    <property type="term" value="F:heat shock protein binding"/>
    <property type="evidence" value="ECO:0007669"/>
    <property type="project" value="InterPro"/>
</dbReference>
<dbReference type="GO" id="GO:0051082">
    <property type="term" value="F:unfolded protein binding"/>
    <property type="evidence" value="ECO:0007669"/>
    <property type="project" value="UniProtKB-UniRule"/>
</dbReference>
<dbReference type="GO" id="GO:0008270">
    <property type="term" value="F:zinc ion binding"/>
    <property type="evidence" value="ECO:0007669"/>
    <property type="project" value="UniProtKB-UniRule"/>
</dbReference>
<dbReference type="GO" id="GO:0051085">
    <property type="term" value="P:chaperone cofactor-dependent protein refolding"/>
    <property type="evidence" value="ECO:0007669"/>
    <property type="project" value="TreeGrafter"/>
</dbReference>
<dbReference type="GO" id="GO:0006260">
    <property type="term" value="P:DNA replication"/>
    <property type="evidence" value="ECO:0007669"/>
    <property type="project" value="UniProtKB-KW"/>
</dbReference>
<dbReference type="GO" id="GO:0042026">
    <property type="term" value="P:protein refolding"/>
    <property type="evidence" value="ECO:0007669"/>
    <property type="project" value="TreeGrafter"/>
</dbReference>
<dbReference type="GO" id="GO:0009408">
    <property type="term" value="P:response to heat"/>
    <property type="evidence" value="ECO:0007669"/>
    <property type="project" value="InterPro"/>
</dbReference>
<dbReference type="CDD" id="cd06257">
    <property type="entry name" value="DnaJ"/>
    <property type="match status" value="1"/>
</dbReference>
<dbReference type="CDD" id="cd10747">
    <property type="entry name" value="DnaJ_C"/>
    <property type="match status" value="1"/>
</dbReference>
<dbReference type="CDD" id="cd10719">
    <property type="entry name" value="DnaJ_zf"/>
    <property type="match status" value="1"/>
</dbReference>
<dbReference type="FunFam" id="2.60.260.20:FF:000005">
    <property type="entry name" value="Chaperone protein dnaJ 1, mitochondrial"/>
    <property type="match status" value="1"/>
</dbReference>
<dbReference type="FunFam" id="2.10.230.10:FF:000002">
    <property type="entry name" value="Molecular chaperone DnaJ"/>
    <property type="match status" value="1"/>
</dbReference>
<dbReference type="Gene3D" id="1.10.287.110">
    <property type="entry name" value="DnaJ domain"/>
    <property type="match status" value="1"/>
</dbReference>
<dbReference type="Gene3D" id="2.10.230.10">
    <property type="entry name" value="Heat shock protein DnaJ, cysteine-rich domain"/>
    <property type="match status" value="1"/>
</dbReference>
<dbReference type="Gene3D" id="2.60.260.20">
    <property type="entry name" value="Urease metallochaperone UreE, N-terminal domain"/>
    <property type="match status" value="2"/>
</dbReference>
<dbReference type="HAMAP" id="MF_01152">
    <property type="entry name" value="DnaJ"/>
    <property type="match status" value="1"/>
</dbReference>
<dbReference type="InterPro" id="IPR012724">
    <property type="entry name" value="DnaJ"/>
</dbReference>
<dbReference type="InterPro" id="IPR002939">
    <property type="entry name" value="DnaJ_C"/>
</dbReference>
<dbReference type="InterPro" id="IPR001623">
    <property type="entry name" value="DnaJ_domain"/>
</dbReference>
<dbReference type="InterPro" id="IPR018253">
    <property type="entry name" value="DnaJ_domain_CS"/>
</dbReference>
<dbReference type="InterPro" id="IPR008971">
    <property type="entry name" value="HSP40/DnaJ_pept-bd"/>
</dbReference>
<dbReference type="InterPro" id="IPR001305">
    <property type="entry name" value="HSP_DnaJ_Cys-rich_dom"/>
</dbReference>
<dbReference type="InterPro" id="IPR036410">
    <property type="entry name" value="HSP_DnaJ_Cys-rich_dom_sf"/>
</dbReference>
<dbReference type="InterPro" id="IPR036869">
    <property type="entry name" value="J_dom_sf"/>
</dbReference>
<dbReference type="NCBIfam" id="TIGR02349">
    <property type="entry name" value="DnaJ_bact"/>
    <property type="match status" value="1"/>
</dbReference>
<dbReference type="NCBIfam" id="NF008035">
    <property type="entry name" value="PRK10767.1"/>
    <property type="match status" value="1"/>
</dbReference>
<dbReference type="NCBIfam" id="NF010872">
    <property type="entry name" value="PRK14279.1"/>
    <property type="match status" value="1"/>
</dbReference>
<dbReference type="PANTHER" id="PTHR43096:SF54">
    <property type="entry name" value="CHAPERONE PROTEIN DNAJ 1"/>
    <property type="match status" value="1"/>
</dbReference>
<dbReference type="PANTHER" id="PTHR43096">
    <property type="entry name" value="DNAJ HOMOLOG 1, MITOCHONDRIAL-RELATED"/>
    <property type="match status" value="1"/>
</dbReference>
<dbReference type="Pfam" id="PF00226">
    <property type="entry name" value="DnaJ"/>
    <property type="match status" value="1"/>
</dbReference>
<dbReference type="Pfam" id="PF01556">
    <property type="entry name" value="DnaJ_C"/>
    <property type="match status" value="1"/>
</dbReference>
<dbReference type="Pfam" id="PF00684">
    <property type="entry name" value="DnaJ_CXXCXGXG"/>
    <property type="match status" value="1"/>
</dbReference>
<dbReference type="PRINTS" id="PR00625">
    <property type="entry name" value="JDOMAIN"/>
</dbReference>
<dbReference type="SMART" id="SM00271">
    <property type="entry name" value="DnaJ"/>
    <property type="match status" value="1"/>
</dbReference>
<dbReference type="SUPFAM" id="SSF46565">
    <property type="entry name" value="Chaperone J-domain"/>
    <property type="match status" value="1"/>
</dbReference>
<dbReference type="SUPFAM" id="SSF57938">
    <property type="entry name" value="DnaJ/Hsp40 cysteine-rich domain"/>
    <property type="match status" value="1"/>
</dbReference>
<dbReference type="SUPFAM" id="SSF49493">
    <property type="entry name" value="HSP40/DnaJ peptide-binding domain"/>
    <property type="match status" value="2"/>
</dbReference>
<dbReference type="PROSITE" id="PS00636">
    <property type="entry name" value="DNAJ_1"/>
    <property type="match status" value="1"/>
</dbReference>
<dbReference type="PROSITE" id="PS50076">
    <property type="entry name" value="DNAJ_2"/>
    <property type="match status" value="1"/>
</dbReference>
<dbReference type="PROSITE" id="PS51188">
    <property type="entry name" value="ZF_CR"/>
    <property type="match status" value="1"/>
</dbReference>
<reference key="1">
    <citation type="journal article" date="2003" name="Appl. Microbiol. Biotechnol.">
        <title>The Corynebacterium glutamicum genome: features and impacts on biotechnological processes.</title>
        <authorList>
            <person name="Ikeda M."/>
            <person name="Nakagawa S."/>
        </authorList>
    </citation>
    <scope>NUCLEOTIDE SEQUENCE [LARGE SCALE GENOMIC DNA]</scope>
    <source>
        <strain>ATCC 13032 / DSM 20300 / JCM 1318 / BCRC 11384 / CCUG 27702 / LMG 3730 / NBRC 12168 / NCIMB 10025 / NRRL B-2784 / 534</strain>
    </source>
</reference>
<reference key="2">
    <citation type="journal article" date="2003" name="J. Biotechnol.">
        <title>The complete Corynebacterium glutamicum ATCC 13032 genome sequence and its impact on the production of L-aspartate-derived amino acids and vitamins.</title>
        <authorList>
            <person name="Kalinowski J."/>
            <person name="Bathe B."/>
            <person name="Bartels D."/>
            <person name="Bischoff N."/>
            <person name="Bott M."/>
            <person name="Burkovski A."/>
            <person name="Dusch N."/>
            <person name="Eggeling L."/>
            <person name="Eikmanns B.J."/>
            <person name="Gaigalat L."/>
            <person name="Goesmann A."/>
            <person name="Hartmann M."/>
            <person name="Huthmacher K."/>
            <person name="Kraemer R."/>
            <person name="Linke B."/>
            <person name="McHardy A.C."/>
            <person name="Meyer F."/>
            <person name="Moeckel B."/>
            <person name="Pfefferle W."/>
            <person name="Puehler A."/>
            <person name="Rey D.A."/>
            <person name="Rueckert C."/>
            <person name="Rupp O."/>
            <person name="Sahm H."/>
            <person name="Wendisch V.F."/>
            <person name="Wiegraebe I."/>
            <person name="Tauch A."/>
        </authorList>
    </citation>
    <scope>NUCLEOTIDE SEQUENCE [LARGE SCALE GENOMIC DNA]</scope>
    <source>
        <strain>ATCC 13032 / DSM 20300 / JCM 1318 / BCRC 11384 / CCUG 27702 / LMG 3730 / NBRC 12168 / NCIMB 10025 / NRRL B-2784 / 534</strain>
    </source>
</reference>
<feature type="chain" id="PRO_0000070771" description="Chaperone protein DnaJ 2">
    <location>
        <begin position="1"/>
        <end position="395"/>
    </location>
</feature>
<feature type="domain" description="J" evidence="1">
    <location>
        <begin position="10"/>
        <end position="75"/>
    </location>
</feature>
<feature type="repeat" description="CXXCXGXG motif">
    <location>
        <begin position="178"/>
        <end position="185"/>
    </location>
</feature>
<feature type="repeat" description="CXXCXGXG motif">
    <location>
        <begin position="194"/>
        <end position="201"/>
    </location>
</feature>
<feature type="repeat" description="CXXCXGXG motif">
    <location>
        <begin position="216"/>
        <end position="223"/>
    </location>
</feature>
<feature type="repeat" description="CXXCXGXG motif">
    <location>
        <begin position="230"/>
        <end position="237"/>
    </location>
</feature>
<feature type="zinc finger region" description="CR-type" evidence="1">
    <location>
        <begin position="165"/>
        <end position="242"/>
    </location>
</feature>
<feature type="binding site" evidence="1">
    <location>
        <position position="178"/>
    </location>
    <ligand>
        <name>Zn(2+)</name>
        <dbReference type="ChEBI" id="CHEBI:29105"/>
        <label>1</label>
    </ligand>
</feature>
<feature type="binding site" evidence="1">
    <location>
        <position position="181"/>
    </location>
    <ligand>
        <name>Zn(2+)</name>
        <dbReference type="ChEBI" id="CHEBI:29105"/>
        <label>1</label>
    </ligand>
</feature>
<feature type="binding site" evidence="1">
    <location>
        <position position="194"/>
    </location>
    <ligand>
        <name>Zn(2+)</name>
        <dbReference type="ChEBI" id="CHEBI:29105"/>
        <label>2</label>
    </ligand>
</feature>
<feature type="binding site" evidence="1">
    <location>
        <position position="197"/>
    </location>
    <ligand>
        <name>Zn(2+)</name>
        <dbReference type="ChEBI" id="CHEBI:29105"/>
        <label>2</label>
    </ligand>
</feature>
<feature type="binding site" evidence="1">
    <location>
        <position position="216"/>
    </location>
    <ligand>
        <name>Zn(2+)</name>
        <dbReference type="ChEBI" id="CHEBI:29105"/>
        <label>2</label>
    </ligand>
</feature>
<feature type="binding site" evidence="1">
    <location>
        <position position="219"/>
    </location>
    <ligand>
        <name>Zn(2+)</name>
        <dbReference type="ChEBI" id="CHEBI:29105"/>
        <label>2</label>
    </ligand>
</feature>
<feature type="binding site" evidence="1">
    <location>
        <position position="230"/>
    </location>
    <ligand>
        <name>Zn(2+)</name>
        <dbReference type="ChEBI" id="CHEBI:29105"/>
        <label>1</label>
    </ligand>
</feature>
<feature type="binding site" evidence="1">
    <location>
        <position position="233"/>
    </location>
    <ligand>
        <name>Zn(2+)</name>
        <dbReference type="ChEBI" id="CHEBI:29105"/>
        <label>1</label>
    </ligand>
</feature>
<accession>Q8NLY8</accession>
<accession>Q6M260</accession>
<organism>
    <name type="scientific">Corynebacterium glutamicum (strain ATCC 13032 / DSM 20300 / JCM 1318 / BCRC 11384 / CCUG 27702 / LMG 3730 / NBRC 12168 / NCIMB 10025 / NRRL B-2784 / 534)</name>
    <dbReference type="NCBI Taxonomy" id="196627"/>
    <lineage>
        <taxon>Bacteria</taxon>
        <taxon>Bacillati</taxon>
        <taxon>Actinomycetota</taxon>
        <taxon>Actinomycetes</taxon>
        <taxon>Mycobacteriales</taxon>
        <taxon>Corynebacteriaceae</taxon>
        <taxon>Corynebacterium</taxon>
    </lineage>
</organism>
<sequence>MNNSEWANKNYYADLGVSSSASEDEIKKAYRKLARENHPDKNPGDKAAEDRFKKAAEAYDVLGDDKKRKEYDELKALLASGGIRGGFGSGGAGFPGGFRTSTGGFDTSDLFGGGQGGGFSTDGGLGDIFGGLFNRGAGSHQSARPTRGADVQTEITLSFVEAAKGTTIPVELTGDAPCNTCHGSGSKSGHPAKCGTCDGTGFTSENKGAFGFSAPCATCGGTGEIITDPCDNCHGRGTVRKSRSITVRIPTGVEDGQKVRLAGQGEAGPNGKPAGDLFVKVHVKKDDVFTRDGSNILITIPVSFSELALGGAISVPTLNKPVKLKLPAGTPDGRTLRVRGRGIEARDSTGDLLVTVQVSVPKNLDDNAAEALRAYAEAETNSGFDPRANWAGQNR</sequence>
<proteinExistence type="inferred from homology"/>
<keyword id="KW-0143">Chaperone</keyword>
<keyword id="KW-0963">Cytoplasm</keyword>
<keyword id="KW-0235">DNA replication</keyword>
<keyword id="KW-0479">Metal-binding</keyword>
<keyword id="KW-1185">Reference proteome</keyword>
<keyword id="KW-0677">Repeat</keyword>
<keyword id="KW-0346">Stress response</keyword>
<keyword id="KW-0862">Zinc</keyword>
<keyword id="KW-0863">Zinc-finger</keyword>